<sequence>MVLLSDVVRTSAEVSATRSRKSKVAAIAGLLSRLGEAEVGPGTAFLAGELRGGRAGVGWATLSALDPAAAGEPSLTVAEVDAAIDALREIGGAGSGQRRAELLADLLARATAAEQEFLVRLLGGELRQGALEGVMLEAIAAAAGVRPDAVRRAFMLSGRLPATAEAALRGGEEELGGFRLEVGRPLRPMLASPAETLDEAMTELGEVSVEYKMDGARIQVHRDGDDVHIYTRTLREITRHVPELVELVRGLDCRSIVLDGETLALDDSGRPRPFQETMGRFGAQSPRDLLLHPYFFDCLHLDGRDLLDLPLRDRLTALEEVAADHRIPAVLTADAEHASGIFDDALEAGHEGVMVKSLDSAYAAGRRGRTWRKVKPSHTLDLVVLAAEWGHGRRSGYLSNLHLGARDPDGGPPIMVGKTFKGLTDELLAWQTEEFQRRETHRDDWTVHLVPELVVEIELDGVQTSTRYPGGVALRFARVLRYRPDKDAASADTIDAVREVRGPQRAAEGG</sequence>
<keyword id="KW-0067">ATP-binding</keyword>
<keyword id="KW-0131">Cell cycle</keyword>
<keyword id="KW-0132">Cell division</keyword>
<keyword id="KW-0227">DNA damage</keyword>
<keyword id="KW-0233">DNA recombination</keyword>
<keyword id="KW-0234">DNA repair</keyword>
<keyword id="KW-0235">DNA replication</keyword>
<keyword id="KW-0436">Ligase</keyword>
<keyword id="KW-0460">Magnesium</keyword>
<keyword id="KW-0479">Metal-binding</keyword>
<keyword id="KW-0547">Nucleotide-binding</keyword>
<keyword id="KW-1185">Reference proteome</keyword>
<accession>A4F870</accession>
<organism>
    <name type="scientific">Saccharopolyspora erythraea (strain ATCC 11635 / DSM 40517 / JCM 4748 / NBRC 13426 / NCIMB 8594 / NRRL 2338)</name>
    <dbReference type="NCBI Taxonomy" id="405948"/>
    <lineage>
        <taxon>Bacteria</taxon>
        <taxon>Bacillati</taxon>
        <taxon>Actinomycetota</taxon>
        <taxon>Actinomycetes</taxon>
        <taxon>Pseudonocardiales</taxon>
        <taxon>Pseudonocardiaceae</taxon>
        <taxon>Saccharopolyspora</taxon>
    </lineage>
</organism>
<gene>
    <name evidence="1" type="primary">lig</name>
    <name type="ordered locus">SACE_0911</name>
</gene>
<feature type="chain" id="PRO_0000365238" description="Probable DNA ligase">
    <location>
        <begin position="1"/>
        <end position="510"/>
    </location>
</feature>
<feature type="active site" description="N6-AMP-lysine intermediate" evidence="1">
    <location>
        <position position="212"/>
    </location>
</feature>
<feature type="binding site" evidence="1">
    <location>
        <position position="210"/>
    </location>
    <ligand>
        <name>ATP</name>
        <dbReference type="ChEBI" id="CHEBI:30616"/>
    </ligand>
</feature>
<feature type="binding site" evidence="1">
    <location>
        <position position="217"/>
    </location>
    <ligand>
        <name>ATP</name>
        <dbReference type="ChEBI" id="CHEBI:30616"/>
    </ligand>
</feature>
<feature type="binding site" evidence="1">
    <location>
        <position position="232"/>
    </location>
    <ligand>
        <name>ATP</name>
        <dbReference type="ChEBI" id="CHEBI:30616"/>
    </ligand>
</feature>
<feature type="binding site" evidence="1">
    <location>
        <position position="261"/>
    </location>
    <ligand>
        <name>ATP</name>
        <dbReference type="ChEBI" id="CHEBI:30616"/>
    </ligand>
</feature>
<feature type="binding site" evidence="1">
    <location>
        <position position="296"/>
    </location>
    <ligand>
        <name>ATP</name>
        <dbReference type="ChEBI" id="CHEBI:30616"/>
    </ligand>
</feature>
<feature type="binding site" evidence="1">
    <location>
        <position position="367"/>
    </location>
    <ligand>
        <name>ATP</name>
        <dbReference type="ChEBI" id="CHEBI:30616"/>
    </ligand>
</feature>
<feature type="binding site" evidence="1">
    <location>
        <position position="373"/>
    </location>
    <ligand>
        <name>ATP</name>
        <dbReference type="ChEBI" id="CHEBI:30616"/>
    </ligand>
</feature>
<comment type="function">
    <text evidence="1">DNA ligase that seals nicks in double-stranded DNA during DNA replication, DNA recombination and DNA repair.</text>
</comment>
<comment type="catalytic activity">
    <reaction evidence="1">
        <text>ATP + (deoxyribonucleotide)n-3'-hydroxyl + 5'-phospho-(deoxyribonucleotide)m = (deoxyribonucleotide)n+m + AMP + diphosphate.</text>
        <dbReference type="EC" id="6.5.1.1"/>
    </reaction>
</comment>
<comment type="cofactor">
    <cofactor evidence="1">
        <name>Mg(2+)</name>
        <dbReference type="ChEBI" id="CHEBI:18420"/>
    </cofactor>
</comment>
<comment type="similarity">
    <text evidence="1">Belongs to the ATP-dependent DNA ligase family.</text>
</comment>
<protein>
    <recommendedName>
        <fullName evidence="1">Probable DNA ligase</fullName>
        <ecNumber evidence="1">6.5.1.1</ecNumber>
    </recommendedName>
    <alternativeName>
        <fullName evidence="1">Polydeoxyribonucleotide synthase [ATP]</fullName>
    </alternativeName>
</protein>
<evidence type="ECO:0000255" key="1">
    <source>
        <dbReference type="HAMAP-Rule" id="MF_00407"/>
    </source>
</evidence>
<name>DNLI_SACEN</name>
<dbReference type="EC" id="6.5.1.1" evidence="1"/>
<dbReference type="EMBL" id="AM420293">
    <property type="protein sequence ID" value="CAM00245.1"/>
    <property type="molecule type" value="Genomic_DNA"/>
</dbReference>
<dbReference type="RefSeq" id="WP_009950482.1">
    <property type="nucleotide sequence ID" value="NC_009142.1"/>
</dbReference>
<dbReference type="SMR" id="A4F870"/>
<dbReference type="STRING" id="405948.SACE_0911"/>
<dbReference type="KEGG" id="sen:SACE_0911"/>
<dbReference type="eggNOG" id="COG1793">
    <property type="taxonomic scope" value="Bacteria"/>
</dbReference>
<dbReference type="HOGENOM" id="CLU_005138_6_1_11"/>
<dbReference type="OrthoDB" id="3733803at2"/>
<dbReference type="Proteomes" id="UP000006728">
    <property type="component" value="Chromosome"/>
</dbReference>
<dbReference type="GO" id="GO:0005524">
    <property type="term" value="F:ATP binding"/>
    <property type="evidence" value="ECO:0007669"/>
    <property type="project" value="UniProtKB-UniRule"/>
</dbReference>
<dbReference type="GO" id="GO:0003677">
    <property type="term" value="F:DNA binding"/>
    <property type="evidence" value="ECO:0007669"/>
    <property type="project" value="InterPro"/>
</dbReference>
<dbReference type="GO" id="GO:0003910">
    <property type="term" value="F:DNA ligase (ATP) activity"/>
    <property type="evidence" value="ECO:0007669"/>
    <property type="project" value="UniProtKB-UniRule"/>
</dbReference>
<dbReference type="GO" id="GO:0046872">
    <property type="term" value="F:metal ion binding"/>
    <property type="evidence" value="ECO:0007669"/>
    <property type="project" value="UniProtKB-KW"/>
</dbReference>
<dbReference type="GO" id="GO:0051301">
    <property type="term" value="P:cell division"/>
    <property type="evidence" value="ECO:0007669"/>
    <property type="project" value="UniProtKB-KW"/>
</dbReference>
<dbReference type="GO" id="GO:0071897">
    <property type="term" value="P:DNA biosynthetic process"/>
    <property type="evidence" value="ECO:0007669"/>
    <property type="project" value="InterPro"/>
</dbReference>
<dbReference type="GO" id="GO:0006310">
    <property type="term" value="P:DNA recombination"/>
    <property type="evidence" value="ECO:0007669"/>
    <property type="project" value="UniProtKB-UniRule"/>
</dbReference>
<dbReference type="GO" id="GO:0006281">
    <property type="term" value="P:DNA repair"/>
    <property type="evidence" value="ECO:0007669"/>
    <property type="project" value="UniProtKB-UniRule"/>
</dbReference>
<dbReference type="GO" id="GO:0006260">
    <property type="term" value="P:DNA replication"/>
    <property type="evidence" value="ECO:0007669"/>
    <property type="project" value="UniProtKB-UniRule"/>
</dbReference>
<dbReference type="CDD" id="cd07901">
    <property type="entry name" value="Adenylation_DNA_ligase_Arch_LigB"/>
    <property type="match status" value="1"/>
</dbReference>
<dbReference type="FunFam" id="2.40.50.140:FF:000163">
    <property type="entry name" value="Probable DNA ligase"/>
    <property type="match status" value="1"/>
</dbReference>
<dbReference type="Gene3D" id="1.10.3260.10">
    <property type="entry name" value="DNA ligase, ATP-dependent, N-terminal domain"/>
    <property type="match status" value="1"/>
</dbReference>
<dbReference type="Gene3D" id="3.30.470.30">
    <property type="entry name" value="DNA ligase/mRNA capping enzyme"/>
    <property type="match status" value="1"/>
</dbReference>
<dbReference type="Gene3D" id="2.40.50.140">
    <property type="entry name" value="Nucleic acid-binding proteins"/>
    <property type="match status" value="1"/>
</dbReference>
<dbReference type="HAMAP" id="MF_00407">
    <property type="entry name" value="DNA_ligase"/>
    <property type="match status" value="1"/>
</dbReference>
<dbReference type="InterPro" id="IPR050191">
    <property type="entry name" value="ATP-dep_DNA_ligase"/>
</dbReference>
<dbReference type="InterPro" id="IPR022865">
    <property type="entry name" value="DNA_ligae_ATP-dep_bac/arc"/>
</dbReference>
<dbReference type="InterPro" id="IPR000977">
    <property type="entry name" value="DNA_ligase_ATP-dep"/>
</dbReference>
<dbReference type="InterPro" id="IPR012309">
    <property type="entry name" value="DNA_ligase_ATP-dep_C"/>
</dbReference>
<dbReference type="InterPro" id="IPR012310">
    <property type="entry name" value="DNA_ligase_ATP-dep_cent"/>
</dbReference>
<dbReference type="InterPro" id="IPR016059">
    <property type="entry name" value="DNA_ligase_ATP-dep_CS"/>
</dbReference>
<dbReference type="InterPro" id="IPR012308">
    <property type="entry name" value="DNA_ligase_ATP-dep_N"/>
</dbReference>
<dbReference type="InterPro" id="IPR036599">
    <property type="entry name" value="DNA_ligase_N_sf"/>
</dbReference>
<dbReference type="InterPro" id="IPR012340">
    <property type="entry name" value="NA-bd_OB-fold"/>
</dbReference>
<dbReference type="NCBIfam" id="TIGR00574">
    <property type="entry name" value="dnl1"/>
    <property type="match status" value="1"/>
</dbReference>
<dbReference type="NCBIfam" id="NF002868">
    <property type="entry name" value="PRK03180.1"/>
    <property type="match status" value="1"/>
</dbReference>
<dbReference type="PANTHER" id="PTHR45674">
    <property type="entry name" value="DNA LIGASE 1/3 FAMILY MEMBER"/>
    <property type="match status" value="1"/>
</dbReference>
<dbReference type="PANTHER" id="PTHR45674:SF13">
    <property type="entry name" value="DNA LIGASE-RELATED"/>
    <property type="match status" value="1"/>
</dbReference>
<dbReference type="Pfam" id="PF04679">
    <property type="entry name" value="DNA_ligase_A_C"/>
    <property type="match status" value="1"/>
</dbReference>
<dbReference type="Pfam" id="PF01068">
    <property type="entry name" value="DNA_ligase_A_M"/>
    <property type="match status" value="1"/>
</dbReference>
<dbReference type="Pfam" id="PF04675">
    <property type="entry name" value="DNA_ligase_A_N"/>
    <property type="match status" value="1"/>
</dbReference>
<dbReference type="SUPFAM" id="SSF117018">
    <property type="entry name" value="ATP-dependent DNA ligase DNA-binding domain"/>
    <property type="match status" value="1"/>
</dbReference>
<dbReference type="SUPFAM" id="SSF56091">
    <property type="entry name" value="DNA ligase/mRNA capping enzyme, catalytic domain"/>
    <property type="match status" value="1"/>
</dbReference>
<dbReference type="SUPFAM" id="SSF50249">
    <property type="entry name" value="Nucleic acid-binding proteins"/>
    <property type="match status" value="1"/>
</dbReference>
<dbReference type="PROSITE" id="PS00697">
    <property type="entry name" value="DNA_LIGASE_A1"/>
    <property type="match status" value="1"/>
</dbReference>
<dbReference type="PROSITE" id="PS50160">
    <property type="entry name" value="DNA_LIGASE_A3"/>
    <property type="match status" value="1"/>
</dbReference>
<proteinExistence type="inferred from homology"/>
<reference key="1">
    <citation type="journal article" date="2007" name="Nat. Biotechnol.">
        <title>Complete genome sequence of the erythromycin-producing bacterium Saccharopolyspora erythraea NRRL23338.</title>
        <authorList>
            <person name="Oliynyk M."/>
            <person name="Samborskyy M."/>
            <person name="Lester J.B."/>
            <person name="Mironenko T."/>
            <person name="Scott N."/>
            <person name="Dickens S."/>
            <person name="Haydock S.F."/>
            <person name="Leadlay P.F."/>
        </authorList>
    </citation>
    <scope>NUCLEOTIDE SEQUENCE [LARGE SCALE GENOMIC DNA]</scope>
    <source>
        <strain>ATCC 11635 / DSM 40517 / JCM 4748 / NBRC 13426 / NCIMB 8594 / NRRL 2338</strain>
    </source>
</reference>